<organism>
    <name type="scientific">Helicobacter pylori (strain HPAG1)</name>
    <dbReference type="NCBI Taxonomy" id="357544"/>
    <lineage>
        <taxon>Bacteria</taxon>
        <taxon>Pseudomonadati</taxon>
        <taxon>Campylobacterota</taxon>
        <taxon>Epsilonproteobacteria</taxon>
        <taxon>Campylobacterales</taxon>
        <taxon>Helicobacteraceae</taxon>
        <taxon>Helicobacter</taxon>
    </lineage>
</organism>
<evidence type="ECO:0000255" key="1">
    <source>
        <dbReference type="HAMAP-Rule" id="MF_00116"/>
    </source>
</evidence>
<dbReference type="EC" id="3.6.1.23" evidence="1"/>
<dbReference type="EMBL" id="CP000241">
    <property type="protein sequence ID" value="ABF84915.1"/>
    <property type="molecule type" value="Genomic_DNA"/>
</dbReference>
<dbReference type="RefSeq" id="WP_000694178.1">
    <property type="nucleotide sequence ID" value="NC_008086.1"/>
</dbReference>
<dbReference type="SMR" id="Q1CT07"/>
<dbReference type="KEGG" id="hpa:HPAG1_0848"/>
<dbReference type="HOGENOM" id="CLU_068508_1_2_7"/>
<dbReference type="UniPathway" id="UPA00610">
    <property type="reaction ID" value="UER00666"/>
</dbReference>
<dbReference type="GO" id="GO:0004170">
    <property type="term" value="F:dUTP diphosphatase activity"/>
    <property type="evidence" value="ECO:0007669"/>
    <property type="project" value="UniProtKB-UniRule"/>
</dbReference>
<dbReference type="GO" id="GO:0000287">
    <property type="term" value="F:magnesium ion binding"/>
    <property type="evidence" value="ECO:0007669"/>
    <property type="project" value="UniProtKB-UniRule"/>
</dbReference>
<dbReference type="GO" id="GO:0006226">
    <property type="term" value="P:dUMP biosynthetic process"/>
    <property type="evidence" value="ECO:0007669"/>
    <property type="project" value="UniProtKB-UniRule"/>
</dbReference>
<dbReference type="GO" id="GO:0046081">
    <property type="term" value="P:dUTP catabolic process"/>
    <property type="evidence" value="ECO:0007669"/>
    <property type="project" value="InterPro"/>
</dbReference>
<dbReference type="CDD" id="cd07557">
    <property type="entry name" value="trimeric_dUTPase"/>
    <property type="match status" value="1"/>
</dbReference>
<dbReference type="FunFam" id="2.70.40.10:FF:000013">
    <property type="entry name" value="Deoxyuridine 5'-triphosphate nucleotidohydrolase"/>
    <property type="match status" value="1"/>
</dbReference>
<dbReference type="Gene3D" id="2.70.40.10">
    <property type="match status" value="1"/>
</dbReference>
<dbReference type="HAMAP" id="MF_00116">
    <property type="entry name" value="dUTPase_bact"/>
    <property type="match status" value="1"/>
</dbReference>
<dbReference type="InterPro" id="IPR008181">
    <property type="entry name" value="dUTPase"/>
</dbReference>
<dbReference type="InterPro" id="IPR029054">
    <property type="entry name" value="dUTPase-like"/>
</dbReference>
<dbReference type="InterPro" id="IPR036157">
    <property type="entry name" value="dUTPase-like_sf"/>
</dbReference>
<dbReference type="InterPro" id="IPR033704">
    <property type="entry name" value="dUTPase_trimeric"/>
</dbReference>
<dbReference type="NCBIfam" id="TIGR00576">
    <property type="entry name" value="dut"/>
    <property type="match status" value="1"/>
</dbReference>
<dbReference type="NCBIfam" id="NF001862">
    <property type="entry name" value="PRK00601.1"/>
    <property type="match status" value="1"/>
</dbReference>
<dbReference type="PANTHER" id="PTHR11241">
    <property type="entry name" value="DEOXYURIDINE 5'-TRIPHOSPHATE NUCLEOTIDOHYDROLASE"/>
    <property type="match status" value="1"/>
</dbReference>
<dbReference type="PANTHER" id="PTHR11241:SF0">
    <property type="entry name" value="DEOXYURIDINE 5'-TRIPHOSPHATE NUCLEOTIDOHYDROLASE"/>
    <property type="match status" value="1"/>
</dbReference>
<dbReference type="Pfam" id="PF00692">
    <property type="entry name" value="dUTPase"/>
    <property type="match status" value="1"/>
</dbReference>
<dbReference type="SUPFAM" id="SSF51283">
    <property type="entry name" value="dUTPase-like"/>
    <property type="match status" value="1"/>
</dbReference>
<accession>Q1CT07</accession>
<protein>
    <recommendedName>
        <fullName evidence="1">Deoxyuridine 5'-triphosphate nucleotidohydrolase</fullName>
        <shortName evidence="1">dUTPase</shortName>
        <ecNumber evidence="1">3.6.1.23</ecNumber>
    </recommendedName>
    <alternativeName>
        <fullName evidence="1">dUTP pyrophosphatase</fullName>
    </alternativeName>
</protein>
<proteinExistence type="inferred from homology"/>
<reference key="1">
    <citation type="journal article" date="2006" name="Proc. Natl. Acad. Sci. U.S.A.">
        <title>The complete genome sequence of a chronic atrophic gastritis Helicobacter pylori strain: evolution during disease progression.</title>
        <authorList>
            <person name="Oh J.D."/>
            <person name="Kling-Baeckhed H."/>
            <person name="Giannakis M."/>
            <person name="Xu J."/>
            <person name="Fulton R.S."/>
            <person name="Fulton L.A."/>
            <person name="Cordum H.S."/>
            <person name="Wang C."/>
            <person name="Elliott G."/>
            <person name="Edwards J."/>
            <person name="Mardis E.R."/>
            <person name="Engstrand L.G."/>
            <person name="Gordon J.I."/>
        </authorList>
    </citation>
    <scope>NUCLEOTIDE SEQUENCE [LARGE SCALE GENOMIC DNA]</scope>
    <source>
        <strain>HPAG1</strain>
    </source>
</reference>
<keyword id="KW-0378">Hydrolase</keyword>
<keyword id="KW-0460">Magnesium</keyword>
<keyword id="KW-0479">Metal-binding</keyword>
<keyword id="KW-0546">Nucleotide metabolism</keyword>
<gene>
    <name evidence="1" type="primary">dut</name>
    <name type="ordered locus">HPAG1_0848</name>
</gene>
<comment type="function">
    <text evidence="1">This enzyme is involved in nucleotide metabolism: it produces dUMP, the immediate precursor of thymidine nucleotides and it decreases the intracellular concentration of dUTP so that uracil cannot be incorporated into DNA.</text>
</comment>
<comment type="catalytic activity">
    <reaction evidence="1">
        <text>dUTP + H2O = dUMP + diphosphate + H(+)</text>
        <dbReference type="Rhea" id="RHEA:10248"/>
        <dbReference type="ChEBI" id="CHEBI:15377"/>
        <dbReference type="ChEBI" id="CHEBI:15378"/>
        <dbReference type="ChEBI" id="CHEBI:33019"/>
        <dbReference type="ChEBI" id="CHEBI:61555"/>
        <dbReference type="ChEBI" id="CHEBI:246422"/>
        <dbReference type="EC" id="3.6.1.23"/>
    </reaction>
</comment>
<comment type="cofactor">
    <cofactor evidence="1">
        <name>Mg(2+)</name>
        <dbReference type="ChEBI" id="CHEBI:18420"/>
    </cofactor>
</comment>
<comment type="pathway">
    <text evidence="1">Pyrimidine metabolism; dUMP biosynthesis; dUMP from dCTP (dUTP route): step 2/2.</text>
</comment>
<comment type="similarity">
    <text evidence="1">Belongs to the dUTPase family.</text>
</comment>
<feature type="chain" id="PRO_1000015477" description="Deoxyuridine 5'-triphosphate nucleotidohydrolase">
    <location>
        <begin position="1"/>
        <end position="145"/>
    </location>
</feature>
<feature type="binding site" evidence="1">
    <location>
        <begin position="62"/>
        <end position="64"/>
    </location>
    <ligand>
        <name>substrate</name>
    </ligand>
</feature>
<feature type="binding site" evidence="1">
    <location>
        <position position="75"/>
    </location>
    <ligand>
        <name>substrate</name>
    </ligand>
</feature>
<feature type="binding site" evidence="1">
    <location>
        <begin position="79"/>
        <end position="81"/>
    </location>
    <ligand>
        <name>substrate</name>
    </ligand>
</feature>
<feature type="binding site" evidence="1">
    <location>
        <position position="89"/>
    </location>
    <ligand>
        <name>substrate</name>
    </ligand>
</feature>
<sequence>MKIKIQKIHPNALIPKYQTEGSSGFDLHAVEEVTIKPHSVGLVKIGICLSLEVGYELQVRTRSGLALNHQVMVLNSPGTVDNDYRGEIKVILANLSDKDFKVQVGDRIAQGVVQKTYKAEFIECEQLDETSRGSGGFGSTGVSKA</sequence>
<name>DUT_HELPH</name>